<evidence type="ECO:0000255" key="1">
    <source>
        <dbReference type="HAMAP-Rule" id="MF_00171"/>
    </source>
</evidence>
<reference key="1">
    <citation type="journal article" date="1998" name="DNA Res.">
        <title>Complete sequence and gene organization of the genome of a hyper-thermophilic archaebacterium, Pyrococcus horikoshii OT3.</title>
        <authorList>
            <person name="Kawarabayasi Y."/>
            <person name="Sawada M."/>
            <person name="Horikawa H."/>
            <person name="Haikawa Y."/>
            <person name="Hino Y."/>
            <person name="Yamamoto S."/>
            <person name="Sekine M."/>
            <person name="Baba S."/>
            <person name="Kosugi H."/>
            <person name="Hosoyama A."/>
            <person name="Nagai Y."/>
            <person name="Sakai M."/>
            <person name="Ogura K."/>
            <person name="Otsuka R."/>
            <person name="Nakazawa H."/>
            <person name="Takamiya M."/>
            <person name="Ohfuku Y."/>
            <person name="Funahashi T."/>
            <person name="Tanaka T."/>
            <person name="Kudoh Y."/>
            <person name="Yamazaki J."/>
            <person name="Kushida N."/>
            <person name="Oguchi A."/>
            <person name="Aoki K."/>
            <person name="Yoshizawa T."/>
            <person name="Nakamura Y."/>
            <person name="Robb F.T."/>
            <person name="Horikoshi K."/>
            <person name="Masuchi Y."/>
            <person name="Shizuya H."/>
            <person name="Kikuchi H."/>
        </authorList>
    </citation>
    <scope>NUCLEOTIDE SEQUENCE [LARGE SCALE GENOMIC DNA]</scope>
    <source>
        <strain>ATCC 700860 / DSM 12428 / JCM 9974 / NBRC 100139 / OT-3</strain>
    </source>
</reference>
<sequence>MKVALKIAYDGTKFHGFQRQPNVRTVEGEIIKALNNSGIMFNELKSASRTDKGVSALGNVVAITTEDERITNPMILNAKLKDVWVLSAVKVPSDFHPRFWARSKVYRYYLPSFDLDVEKVKECSKLFLGVHDFSAFSRVDGRETVRSIDRIEVLDLGPVLAIEVEAKSFLWEMVRRIVKTLELCGLGKLSSEEVRKMLRGKFEKSRKVPPAPAEGLLLVEVKYKGIEFPIHDKALEKFRKDMEKRFREKIARAYLLWDMTKI</sequence>
<protein>
    <recommendedName>
        <fullName evidence="1">tRNA pseudouridine synthase A</fullName>
        <ecNumber evidence="1">5.4.99.12</ecNumber>
    </recommendedName>
    <alternativeName>
        <fullName evidence="1">tRNA pseudouridine(38-40) synthase</fullName>
    </alternativeName>
    <alternativeName>
        <fullName evidence="1">tRNA pseudouridylate synthase I</fullName>
    </alternativeName>
    <alternativeName>
        <fullName evidence="1">tRNA-uridine isomerase I</fullName>
    </alternativeName>
</protein>
<keyword id="KW-0413">Isomerase</keyword>
<keyword id="KW-0819">tRNA processing</keyword>
<gene>
    <name evidence="1" type="primary">truA</name>
    <name type="ordered locus">PH1242</name>
    <name type="ORF">PHBK012</name>
</gene>
<feature type="chain" id="PRO_0000057513" description="tRNA pseudouridine synthase A">
    <location>
        <begin position="1"/>
        <end position="262"/>
    </location>
</feature>
<feature type="active site" description="Nucleophile" evidence="1">
    <location>
        <position position="51"/>
    </location>
</feature>
<feature type="binding site" evidence="1">
    <location>
        <position position="106"/>
    </location>
    <ligand>
        <name>substrate</name>
    </ligand>
</feature>
<comment type="function">
    <text evidence="1">Formation of pseudouridine at positions 38, 39 and 40 in the anticodon stem and loop of transfer RNAs.</text>
</comment>
<comment type="catalytic activity">
    <reaction evidence="1">
        <text>uridine(38/39/40) in tRNA = pseudouridine(38/39/40) in tRNA</text>
        <dbReference type="Rhea" id="RHEA:22376"/>
        <dbReference type="Rhea" id="RHEA-COMP:10085"/>
        <dbReference type="Rhea" id="RHEA-COMP:10087"/>
        <dbReference type="ChEBI" id="CHEBI:65314"/>
        <dbReference type="ChEBI" id="CHEBI:65315"/>
        <dbReference type="EC" id="5.4.99.12"/>
    </reaction>
</comment>
<comment type="similarity">
    <text evidence="1">Belongs to the tRNA pseudouridine synthase TruA family.</text>
</comment>
<organism>
    <name type="scientific">Pyrococcus horikoshii (strain ATCC 700860 / DSM 12428 / JCM 9974 / NBRC 100139 / OT-3)</name>
    <dbReference type="NCBI Taxonomy" id="70601"/>
    <lineage>
        <taxon>Archaea</taxon>
        <taxon>Methanobacteriati</taxon>
        <taxon>Methanobacteriota</taxon>
        <taxon>Thermococci</taxon>
        <taxon>Thermococcales</taxon>
        <taxon>Thermococcaceae</taxon>
        <taxon>Pyrococcus</taxon>
    </lineage>
</organism>
<accession>O58941</accession>
<name>TRUA_PYRHO</name>
<proteinExistence type="inferred from homology"/>
<dbReference type="EC" id="5.4.99.12" evidence="1"/>
<dbReference type="EMBL" id="BA000001">
    <property type="protein sequence ID" value="BAA30342.1"/>
    <property type="molecule type" value="Genomic_DNA"/>
</dbReference>
<dbReference type="PIR" id="D71068">
    <property type="entry name" value="D71068"/>
</dbReference>
<dbReference type="RefSeq" id="WP_010885329.1">
    <property type="nucleotide sequence ID" value="NC_000961.1"/>
</dbReference>
<dbReference type="SMR" id="O58941"/>
<dbReference type="STRING" id="70601.gene:9378204"/>
<dbReference type="EnsemblBacteria" id="BAA30342">
    <property type="protein sequence ID" value="BAA30342"/>
    <property type="gene ID" value="BAA30342"/>
</dbReference>
<dbReference type="GeneID" id="1443564"/>
<dbReference type="KEGG" id="pho:PH1242"/>
<dbReference type="eggNOG" id="arCOG04449">
    <property type="taxonomic scope" value="Archaea"/>
</dbReference>
<dbReference type="OrthoDB" id="25720at2157"/>
<dbReference type="Proteomes" id="UP000000752">
    <property type="component" value="Chromosome"/>
</dbReference>
<dbReference type="GO" id="GO:0003723">
    <property type="term" value="F:RNA binding"/>
    <property type="evidence" value="ECO:0007669"/>
    <property type="project" value="InterPro"/>
</dbReference>
<dbReference type="GO" id="GO:0160147">
    <property type="term" value="F:tRNA pseudouridine(38-40) synthase activity"/>
    <property type="evidence" value="ECO:0007669"/>
    <property type="project" value="UniProtKB-EC"/>
</dbReference>
<dbReference type="GO" id="GO:0031119">
    <property type="term" value="P:tRNA pseudouridine synthesis"/>
    <property type="evidence" value="ECO:0007669"/>
    <property type="project" value="UniProtKB-UniRule"/>
</dbReference>
<dbReference type="CDD" id="cd02866">
    <property type="entry name" value="PseudoU_synth_TruA_Archea"/>
    <property type="match status" value="1"/>
</dbReference>
<dbReference type="FunFam" id="3.30.70.580:FF:000001">
    <property type="entry name" value="tRNA pseudouridine synthase A"/>
    <property type="match status" value="1"/>
</dbReference>
<dbReference type="Gene3D" id="3.30.70.660">
    <property type="entry name" value="Pseudouridine synthase I, catalytic domain, C-terminal subdomain"/>
    <property type="match status" value="1"/>
</dbReference>
<dbReference type="Gene3D" id="3.30.70.580">
    <property type="entry name" value="Pseudouridine synthase I, catalytic domain, N-terminal subdomain"/>
    <property type="match status" value="1"/>
</dbReference>
<dbReference type="HAMAP" id="MF_00171">
    <property type="entry name" value="TruA"/>
    <property type="match status" value="1"/>
</dbReference>
<dbReference type="InterPro" id="IPR020103">
    <property type="entry name" value="PsdUridine_synth_cat_dom_sf"/>
</dbReference>
<dbReference type="InterPro" id="IPR001406">
    <property type="entry name" value="PsdUridine_synth_TruA"/>
</dbReference>
<dbReference type="InterPro" id="IPR020097">
    <property type="entry name" value="PsdUridine_synth_TruA_a/b_dom"/>
</dbReference>
<dbReference type="InterPro" id="IPR020095">
    <property type="entry name" value="PsdUridine_synth_TruA_C"/>
</dbReference>
<dbReference type="InterPro" id="IPR020094">
    <property type="entry name" value="TruA/RsuA/RluB/E/F_N"/>
</dbReference>
<dbReference type="NCBIfam" id="TIGR00071">
    <property type="entry name" value="hisT_truA"/>
    <property type="match status" value="1"/>
</dbReference>
<dbReference type="PANTHER" id="PTHR11142">
    <property type="entry name" value="PSEUDOURIDYLATE SYNTHASE"/>
    <property type="match status" value="1"/>
</dbReference>
<dbReference type="PANTHER" id="PTHR11142:SF0">
    <property type="entry name" value="TRNA PSEUDOURIDINE SYNTHASE-LIKE 1"/>
    <property type="match status" value="1"/>
</dbReference>
<dbReference type="Pfam" id="PF01416">
    <property type="entry name" value="PseudoU_synth_1"/>
    <property type="match status" value="1"/>
</dbReference>
<dbReference type="PIRSF" id="PIRSF001430">
    <property type="entry name" value="tRNA_psdUrid_synth"/>
    <property type="match status" value="1"/>
</dbReference>
<dbReference type="SUPFAM" id="SSF55120">
    <property type="entry name" value="Pseudouridine synthase"/>
    <property type="match status" value="1"/>
</dbReference>